<evidence type="ECO:0000250" key="1">
    <source>
        <dbReference type="UniProtKB" id="Q86XP1"/>
    </source>
</evidence>
<evidence type="ECO:0000255" key="2"/>
<evidence type="ECO:0000255" key="3">
    <source>
        <dbReference type="PROSITE-ProRule" id="PRU00145"/>
    </source>
</evidence>
<evidence type="ECO:0000255" key="4">
    <source>
        <dbReference type="PROSITE-ProRule" id="PRU00184"/>
    </source>
</evidence>
<evidence type="ECO:0000255" key="5">
    <source>
        <dbReference type="PROSITE-ProRule" id="PRU00226"/>
    </source>
</evidence>
<evidence type="ECO:0000255" key="6">
    <source>
        <dbReference type="PROSITE-ProRule" id="PRU00783"/>
    </source>
</evidence>
<evidence type="ECO:0000256" key="7">
    <source>
        <dbReference type="SAM" id="MobiDB-lite"/>
    </source>
</evidence>
<evidence type="ECO:0000305" key="8"/>
<evidence type="ECO:0000312" key="9">
    <source>
        <dbReference type="EMBL" id="AAO39647.1"/>
    </source>
</evidence>
<evidence type="ECO:0000312" key="10">
    <source>
        <dbReference type="EMBL" id="ABW08617.1"/>
    </source>
</evidence>
<feature type="chain" id="PRO_0000375987" description="Diacylglycerol kinase eta">
    <location>
        <begin position="1"/>
        <end position="1895"/>
    </location>
</feature>
<feature type="domain" description="PH" evidence="3">
    <location>
        <begin position="82"/>
        <end position="175"/>
    </location>
</feature>
<feature type="domain" description="DAGKc" evidence="6">
    <location>
        <begin position="349"/>
        <end position="485"/>
    </location>
</feature>
<feature type="domain" description="SAM" evidence="4">
    <location>
        <begin position="1832"/>
        <end position="1895"/>
    </location>
</feature>
<feature type="zinc finger region" description="Phorbol-ester/DAG-type 1" evidence="5">
    <location>
        <begin position="195"/>
        <end position="245"/>
    </location>
</feature>
<feature type="zinc finger region" description="Phorbol-ester/DAG-type 2" evidence="5">
    <location>
        <begin position="267"/>
        <end position="318"/>
    </location>
</feature>
<feature type="region of interest" description="Disordered" evidence="7">
    <location>
        <begin position="1"/>
        <end position="37"/>
    </location>
</feature>
<feature type="region of interest" description="Disordered" evidence="7">
    <location>
        <begin position="781"/>
        <end position="801"/>
    </location>
</feature>
<feature type="region of interest" description="Disordered" evidence="7">
    <location>
        <begin position="1012"/>
        <end position="1053"/>
    </location>
</feature>
<feature type="region of interest" description="Disordered" evidence="7">
    <location>
        <begin position="1113"/>
        <end position="1137"/>
    </location>
</feature>
<feature type="region of interest" description="Disordered" evidence="7">
    <location>
        <begin position="1172"/>
        <end position="1191"/>
    </location>
</feature>
<feature type="compositionally biased region" description="Basic and acidic residues" evidence="7">
    <location>
        <begin position="1"/>
        <end position="10"/>
    </location>
</feature>
<feature type="compositionally biased region" description="Low complexity" evidence="7">
    <location>
        <begin position="20"/>
        <end position="37"/>
    </location>
</feature>
<feature type="compositionally biased region" description="Basic and acidic residues" evidence="7">
    <location>
        <begin position="1113"/>
        <end position="1128"/>
    </location>
</feature>
<feature type="compositionally biased region" description="Polar residues" evidence="7">
    <location>
        <begin position="1172"/>
        <end position="1184"/>
    </location>
</feature>
<feature type="sequence conflict" description="In Ref. 3; AAO39647." evidence="8" ref="3">
    <location>
        <begin position="1192"/>
        <end position="1215"/>
    </location>
</feature>
<proteinExistence type="evidence at transcript level"/>
<sequence>MAHLKLDTLHVQRSPRGSRRSSPSSGRSSACSSGSISPVPIIPIISISHDGDESESESEIETEPARLFQRRMSTKCTNNLAAIIKEGFLLKHTWSFQRWRRRYFRLKRNMLFYAKDEKCDVFDDIDLSDLCYFECGIKNVNHSFQIITPTRSLVLCAESRREMEDWLGSLKTATAPQRPRGDSFLIEQHDILSNHHHWYATSHARPTYCNVCRDALSGVTSHGLSCEVCKCKVHKRCAAKSIANCKWTTLASVGKDIIEQADGIIMPHQWMEGNLPVSSMCAVCKKTCGSVLRLQDWRCLWCRATVHVACRPQMAVACPIGPAKLSVVPPTSVHSISTDDAWDVASPKGNFSPLLVFVNSKSGDNQGVKFLRRFKQLLNPAQVFDLISTGPSLGLRLFRHFEMFRILVCSGDGSVGWVLSEIDRFNMHKQCQVAVMPLGTGNDLARVLGWGSSCDDDTHLPQILERYESASTKMLDRWSIMVFEKAIPVPKTPKMSISTEQEAMLTGMVTSANHHLRFIVETNDTQTLIRSTRNLCDTVDDLVCRISEHHKDDEQLAVKCDILRQKLNMLLDALQEEEIGAHSGDDLIATIRSLIARSIPVTPGSNAYLLNPNISIEKTEKDQINTKERRNSRSLRSSEKEALQCRANSVKRAIYNVVEHSEPGRPKRYQRKLSITPFEALKLPTASGESTPCTSPLPIIPPINIISPTMETSRLTCISPLPDTRRDSVDENFFNSINLPAPRQFADSRRSSGVEVIQEIEEGANGETVYRKSRMSLTGGANIDDAGNRLSPCSDAGENTPTERKVDFLRVPIHTGEPIVDPLCDYRPHEVFERTYYMTREMDKGKEKDKEKDKPVEIDKEKDTCVEKEGSMPAEKLVHTCNLQVPGVVVTPNPQNVYSSASITIIDTDAQTTTEQSSSDDLGGEASDVLSAISNEECSVASEIFDKQDAGQTVGDIIQNMDASNFTHIDSPETSDETEAMPGESIMDDISSVLGHDITYALQDNTLTDDTTTLCSEHAGPPKPPRKKSLSALSRTQAHPRRRNSSPPRMARLARMDSDDNPQQFGFENIVFEIDNRCDDQKMREPPRYCSLAQFVEGNDIARQSFKQLMLEQHRGGDNDSDYPEHEQTPTNKGANLLATTSEDELSTQTAIKIEIQDIDATVRNLNSSMKPNTILTTSTSPTKKSGHGQDVKRITFDESCKKESFDDVNPNYPQISVVVRPPTPLRGDCIKPTVSLLPVSSGGAMTVSMTCSGMLGVRAMNASEIRRHSSHAPGLAVREFDKDKDRRHSGFNPNQLTLDPEHARFLSSSPAASRRISCGSLFKPNEALPNLQTLKGSKSSLFMGSTLFGFDHLASAEKDKEEKSGKDKEKTPTDETNRKLPIINPLVRLPNWPNLANGGGFISKCLLANADTLCAAVSPLMDPDETLLAGYHEKCVMNNYFGIGIDAKISLDFHNKREEHPEKCRSRARNYMWYGVLGSKQLLQKTCKNLEQRVQLECDGQRIPLPELQGIVILNIPSFMGGTNFWGSSKKDDIFLPPSFDDRVLEVVAVFGSVQMAASRLINLQHHRIAQCQSVQINILGDEEIPIQVDGEAWLQPPGMIRILHKNRVQMLCRNRSLELSLKSWQEKQRQHSISIQRDASSTASEHANSTDEVISERECYVLLNFIEAVSSLVKWVKFLIISHPALQHDLYEVACRASEALESIHPQGKLLEGPSLRTKLVEVIDSSRQLYDDACTLLRDRGHSLILREDLETKLSAALANMEMELKKCSVQKCIDGKLRAYFNVLAPNEESDGRRKSRPFWVRLRSGSTAGQQAFKPPLTNTREAANNWSVNEVVTWLETMQLSEYVDSFLKNDIRGKELLTLGRRDLKDLGVVKVGHVKRILQAIKDLSEN</sequence>
<reference evidence="10" key="1">
    <citation type="journal article" date="2000" name="Science">
        <title>The genome sequence of Drosophila melanogaster.</title>
        <authorList>
            <person name="Adams M.D."/>
            <person name="Celniker S.E."/>
            <person name="Holt R.A."/>
            <person name="Evans C.A."/>
            <person name="Gocayne J.D."/>
            <person name="Amanatides P.G."/>
            <person name="Scherer S.E."/>
            <person name="Li P.W."/>
            <person name="Hoskins R.A."/>
            <person name="Galle R.F."/>
            <person name="George R.A."/>
            <person name="Lewis S.E."/>
            <person name="Richards S."/>
            <person name="Ashburner M."/>
            <person name="Henderson S.N."/>
            <person name="Sutton G.G."/>
            <person name="Wortman J.R."/>
            <person name="Yandell M.D."/>
            <person name="Zhang Q."/>
            <person name="Chen L.X."/>
            <person name="Brandon R.C."/>
            <person name="Rogers Y.-H.C."/>
            <person name="Blazej R.G."/>
            <person name="Champe M."/>
            <person name="Pfeiffer B.D."/>
            <person name="Wan K.H."/>
            <person name="Doyle C."/>
            <person name="Baxter E.G."/>
            <person name="Helt G."/>
            <person name="Nelson C.R."/>
            <person name="Miklos G.L.G."/>
            <person name="Abril J.F."/>
            <person name="Agbayani A."/>
            <person name="An H.-J."/>
            <person name="Andrews-Pfannkoch C."/>
            <person name="Baldwin D."/>
            <person name="Ballew R.M."/>
            <person name="Basu A."/>
            <person name="Baxendale J."/>
            <person name="Bayraktaroglu L."/>
            <person name="Beasley E.M."/>
            <person name="Beeson K.Y."/>
            <person name="Benos P.V."/>
            <person name="Berman B.P."/>
            <person name="Bhandari D."/>
            <person name="Bolshakov S."/>
            <person name="Borkova D."/>
            <person name="Botchan M.R."/>
            <person name="Bouck J."/>
            <person name="Brokstein P."/>
            <person name="Brottier P."/>
            <person name="Burtis K.C."/>
            <person name="Busam D.A."/>
            <person name="Butler H."/>
            <person name="Cadieu E."/>
            <person name="Center A."/>
            <person name="Chandra I."/>
            <person name="Cherry J.M."/>
            <person name="Cawley S."/>
            <person name="Dahlke C."/>
            <person name="Davenport L.B."/>
            <person name="Davies P."/>
            <person name="de Pablos B."/>
            <person name="Delcher A."/>
            <person name="Deng Z."/>
            <person name="Mays A.D."/>
            <person name="Dew I."/>
            <person name="Dietz S.M."/>
            <person name="Dodson K."/>
            <person name="Doup L.E."/>
            <person name="Downes M."/>
            <person name="Dugan-Rocha S."/>
            <person name="Dunkov B.C."/>
            <person name="Dunn P."/>
            <person name="Durbin K.J."/>
            <person name="Evangelista C.C."/>
            <person name="Ferraz C."/>
            <person name="Ferriera S."/>
            <person name="Fleischmann W."/>
            <person name="Fosler C."/>
            <person name="Gabrielian A.E."/>
            <person name="Garg N.S."/>
            <person name="Gelbart W.M."/>
            <person name="Glasser K."/>
            <person name="Glodek A."/>
            <person name="Gong F."/>
            <person name="Gorrell J.H."/>
            <person name="Gu Z."/>
            <person name="Guan P."/>
            <person name="Harris M."/>
            <person name="Harris N.L."/>
            <person name="Harvey D.A."/>
            <person name="Heiman T.J."/>
            <person name="Hernandez J.R."/>
            <person name="Houck J."/>
            <person name="Hostin D."/>
            <person name="Houston K.A."/>
            <person name="Howland T.J."/>
            <person name="Wei M.-H."/>
            <person name="Ibegwam C."/>
            <person name="Jalali M."/>
            <person name="Kalush F."/>
            <person name="Karpen G.H."/>
            <person name="Ke Z."/>
            <person name="Kennison J.A."/>
            <person name="Ketchum K.A."/>
            <person name="Kimmel B.E."/>
            <person name="Kodira C.D."/>
            <person name="Kraft C.L."/>
            <person name="Kravitz S."/>
            <person name="Kulp D."/>
            <person name="Lai Z."/>
            <person name="Lasko P."/>
            <person name="Lei Y."/>
            <person name="Levitsky A.A."/>
            <person name="Li J.H."/>
            <person name="Li Z."/>
            <person name="Liang Y."/>
            <person name="Lin X."/>
            <person name="Liu X."/>
            <person name="Mattei B."/>
            <person name="McIntosh T.C."/>
            <person name="McLeod M.P."/>
            <person name="McPherson D."/>
            <person name="Merkulov G."/>
            <person name="Milshina N.V."/>
            <person name="Mobarry C."/>
            <person name="Morris J."/>
            <person name="Moshrefi A."/>
            <person name="Mount S.M."/>
            <person name="Moy M."/>
            <person name="Murphy B."/>
            <person name="Murphy L."/>
            <person name="Muzny D.M."/>
            <person name="Nelson D.L."/>
            <person name="Nelson D.R."/>
            <person name="Nelson K.A."/>
            <person name="Nixon K."/>
            <person name="Nusskern D.R."/>
            <person name="Pacleb J.M."/>
            <person name="Palazzolo M."/>
            <person name="Pittman G.S."/>
            <person name="Pan S."/>
            <person name="Pollard J."/>
            <person name="Puri V."/>
            <person name="Reese M.G."/>
            <person name="Reinert K."/>
            <person name="Remington K."/>
            <person name="Saunders R.D.C."/>
            <person name="Scheeler F."/>
            <person name="Shen H."/>
            <person name="Shue B.C."/>
            <person name="Siden-Kiamos I."/>
            <person name="Simpson M."/>
            <person name="Skupski M.P."/>
            <person name="Smith T.J."/>
            <person name="Spier E."/>
            <person name="Spradling A.C."/>
            <person name="Stapleton M."/>
            <person name="Strong R."/>
            <person name="Sun E."/>
            <person name="Svirskas R."/>
            <person name="Tector C."/>
            <person name="Turner R."/>
            <person name="Venter E."/>
            <person name="Wang A.H."/>
            <person name="Wang X."/>
            <person name="Wang Z.-Y."/>
            <person name="Wassarman D.A."/>
            <person name="Weinstock G.M."/>
            <person name="Weissenbach J."/>
            <person name="Williams S.M."/>
            <person name="Woodage T."/>
            <person name="Worley K.C."/>
            <person name="Wu D."/>
            <person name="Yang S."/>
            <person name="Yao Q.A."/>
            <person name="Ye J."/>
            <person name="Yeh R.-F."/>
            <person name="Zaveri J.S."/>
            <person name="Zhan M."/>
            <person name="Zhang G."/>
            <person name="Zhao Q."/>
            <person name="Zheng L."/>
            <person name="Zheng X.H."/>
            <person name="Zhong F.N."/>
            <person name="Zhong W."/>
            <person name="Zhou X."/>
            <person name="Zhu S.C."/>
            <person name="Zhu X."/>
            <person name="Smith H.O."/>
            <person name="Gibbs R.A."/>
            <person name="Myers E.W."/>
            <person name="Rubin G.M."/>
            <person name="Venter J.C."/>
        </authorList>
    </citation>
    <scope>NUCLEOTIDE SEQUENCE [LARGE SCALE GENOMIC DNA]</scope>
    <source>
        <strain>Berkeley</strain>
    </source>
</reference>
<reference evidence="8 10" key="2">
    <citation type="journal article" date="2002" name="Genome Biol.">
        <title>Annotation of the Drosophila melanogaster euchromatic genome: a systematic review.</title>
        <authorList>
            <person name="Misra S."/>
            <person name="Crosby M.A."/>
            <person name="Mungall C.J."/>
            <person name="Matthews B.B."/>
            <person name="Campbell K.S."/>
            <person name="Hradecky P."/>
            <person name="Huang Y."/>
            <person name="Kaminker J.S."/>
            <person name="Millburn G.H."/>
            <person name="Prochnik S.E."/>
            <person name="Smith C.D."/>
            <person name="Tupy J.L."/>
            <person name="Whitfield E.J."/>
            <person name="Bayraktaroglu L."/>
            <person name="Berman B.P."/>
            <person name="Bettencourt B.R."/>
            <person name="Celniker S.E."/>
            <person name="de Grey A.D.N.J."/>
            <person name="Drysdale R.A."/>
            <person name="Harris N.L."/>
            <person name="Richter J."/>
            <person name="Russo S."/>
            <person name="Schroeder A.J."/>
            <person name="Shu S.Q."/>
            <person name="Stapleton M."/>
            <person name="Yamada C."/>
            <person name="Ashburner M."/>
            <person name="Gelbart W.M."/>
            <person name="Rubin G.M."/>
            <person name="Lewis S.E."/>
        </authorList>
    </citation>
    <scope>GENOME REANNOTATION</scope>
    <source>
        <strain>Berkeley</strain>
    </source>
</reference>
<reference evidence="8 9" key="3">
    <citation type="submission" date="2003-02" db="EMBL/GenBank/DDBJ databases">
        <authorList>
            <person name="Stapleton M."/>
            <person name="Brokstein P."/>
            <person name="Hong L."/>
            <person name="Agbayani A."/>
            <person name="Carlson J.W."/>
            <person name="Champe M."/>
            <person name="Chavez C."/>
            <person name="Dorsett V."/>
            <person name="Dresnek D."/>
            <person name="Farfan D."/>
            <person name="Frise E."/>
            <person name="George R.A."/>
            <person name="Gonzalez M."/>
            <person name="Guarin H."/>
            <person name="Kronmiller B."/>
            <person name="Li P.W."/>
            <person name="Liao G."/>
            <person name="Miranda A."/>
            <person name="Mungall C.J."/>
            <person name="Nunoo J."/>
            <person name="Pacleb J.M."/>
            <person name="Paragas V."/>
            <person name="Park S."/>
            <person name="Patel S."/>
            <person name="Phouanenavong S."/>
            <person name="Wan K.H."/>
            <person name="Yu C."/>
            <person name="Lewis S.E."/>
            <person name="Rubin G.M."/>
            <person name="Celniker S.E."/>
        </authorList>
    </citation>
    <scope>NUCLEOTIDE SEQUENCE [LARGE SCALE MRNA] OF 1080-1895</scope>
    <source>
        <strain>Berkeley</strain>
        <tissue>Testis</tissue>
    </source>
</reference>
<protein>
    <recommendedName>
        <fullName evidence="1">Diacylglycerol kinase eta</fullName>
        <shortName evidence="1">DAG kinase eta</shortName>
        <ecNumber>2.7.1.107</ecNumber>
    </recommendedName>
</protein>
<gene>
    <name type="ORF">CG34384</name>
</gene>
<dbReference type="EC" id="2.7.1.107"/>
<dbReference type="EMBL" id="AE014297">
    <property type="protein sequence ID" value="ABW08617.1"/>
    <property type="molecule type" value="Genomic_DNA"/>
</dbReference>
<dbReference type="EMBL" id="BT003643">
    <property type="protein sequence ID" value="AAO39647.1"/>
    <property type="status" value="ALT_SEQ"/>
    <property type="molecule type" value="mRNA"/>
</dbReference>
<dbReference type="RefSeq" id="NP_001097704.1">
    <property type="nucleotide sequence ID" value="NM_001104234.4"/>
</dbReference>
<dbReference type="SMR" id="A8JQ65"/>
<dbReference type="BioGRID" id="624993">
    <property type="interactions" value="1"/>
</dbReference>
<dbReference type="FunCoup" id="A8JQ65">
    <property type="interactions" value="348"/>
</dbReference>
<dbReference type="STRING" id="7227.FBpp0293459"/>
<dbReference type="GlyGen" id="A8JQ65">
    <property type="glycosylation" value="1 site"/>
</dbReference>
<dbReference type="PaxDb" id="7227-FBpp0293459"/>
<dbReference type="EnsemblMetazoa" id="FBtr0112625">
    <property type="protein sequence ID" value="FBpp0111537"/>
    <property type="gene ID" value="FBgn0085413"/>
</dbReference>
<dbReference type="GeneID" id="5740362"/>
<dbReference type="KEGG" id="dme:Dmel_CG34384"/>
<dbReference type="UCSC" id="CG34384-RA">
    <property type="organism name" value="d. melanogaster"/>
</dbReference>
<dbReference type="AGR" id="FB:FBgn0085413"/>
<dbReference type="FlyBase" id="FBgn0085413">
    <property type="gene designation" value="CG34384"/>
</dbReference>
<dbReference type="VEuPathDB" id="VectorBase:FBgn0085413"/>
<dbReference type="eggNOG" id="KOG1170">
    <property type="taxonomic scope" value="Eukaryota"/>
</dbReference>
<dbReference type="GeneTree" id="ENSGT00940000167989"/>
<dbReference type="InParanoid" id="A8JQ65"/>
<dbReference type="OrthoDB" id="196165at2759"/>
<dbReference type="Reactome" id="R-DME-114508">
    <property type="pathway name" value="Effects of PIP2 hydrolysis"/>
</dbReference>
<dbReference type="BioGRID-ORCS" id="5740362">
    <property type="hits" value="0 hits in 3 CRISPR screens"/>
</dbReference>
<dbReference type="GenomeRNAi" id="5740362"/>
<dbReference type="PRO" id="PR:A8JQ65"/>
<dbReference type="Proteomes" id="UP000000803">
    <property type="component" value="Chromosome 3R"/>
</dbReference>
<dbReference type="Bgee" id="FBgn0085413">
    <property type="expression patterns" value="Expressed in neuron of aristal sensillum (Drosophila) in antenna and 150 other cell types or tissues"/>
</dbReference>
<dbReference type="ExpressionAtlas" id="A8JQ65">
    <property type="expression patterns" value="baseline and differential"/>
</dbReference>
<dbReference type="GO" id="GO:0005737">
    <property type="term" value="C:cytoplasm"/>
    <property type="evidence" value="ECO:0007669"/>
    <property type="project" value="UniProtKB-SubCell"/>
</dbReference>
<dbReference type="GO" id="GO:0005886">
    <property type="term" value="C:plasma membrane"/>
    <property type="evidence" value="ECO:0000318"/>
    <property type="project" value="GO_Central"/>
</dbReference>
<dbReference type="GO" id="GO:0005524">
    <property type="term" value="F:ATP binding"/>
    <property type="evidence" value="ECO:0007669"/>
    <property type="project" value="UniProtKB-KW"/>
</dbReference>
<dbReference type="GO" id="GO:0004143">
    <property type="term" value="F:ATP-dependent diacylglycerol kinase activity"/>
    <property type="evidence" value="ECO:0000250"/>
    <property type="project" value="FlyBase"/>
</dbReference>
<dbReference type="GO" id="GO:0008270">
    <property type="term" value="F:zinc ion binding"/>
    <property type="evidence" value="ECO:0007669"/>
    <property type="project" value="UniProtKB-KW"/>
</dbReference>
<dbReference type="GO" id="GO:0046339">
    <property type="term" value="P:diacylglycerol metabolic process"/>
    <property type="evidence" value="ECO:0000318"/>
    <property type="project" value="GO_Central"/>
</dbReference>
<dbReference type="GO" id="GO:0035556">
    <property type="term" value="P:intracellular signal transduction"/>
    <property type="evidence" value="ECO:0000318"/>
    <property type="project" value="GO_Central"/>
</dbReference>
<dbReference type="GO" id="GO:0006654">
    <property type="term" value="P:phosphatidic acid biosynthetic process"/>
    <property type="evidence" value="ECO:0000318"/>
    <property type="project" value="GO_Central"/>
</dbReference>
<dbReference type="GO" id="GO:0007200">
    <property type="term" value="P:phospholipase C-activating G protein-coupled receptor signaling pathway"/>
    <property type="evidence" value="ECO:0000250"/>
    <property type="project" value="FlyBase"/>
</dbReference>
<dbReference type="CDD" id="cd20800">
    <property type="entry name" value="C1_DGK_typeII_rpt1"/>
    <property type="match status" value="1"/>
</dbReference>
<dbReference type="CDD" id="cd20852">
    <property type="entry name" value="C1_DGK_typeII_rpt2"/>
    <property type="match status" value="1"/>
</dbReference>
<dbReference type="CDD" id="cd13274">
    <property type="entry name" value="PH_DGK_type2"/>
    <property type="match status" value="1"/>
</dbReference>
<dbReference type="CDD" id="cd09507">
    <property type="entry name" value="SAM_DGK-delta-eta"/>
    <property type="match status" value="1"/>
</dbReference>
<dbReference type="FunFam" id="1.10.150.50:FF:000021">
    <property type="entry name" value="Diacylglycerol kinase"/>
    <property type="match status" value="1"/>
</dbReference>
<dbReference type="FunFam" id="2.30.29.30:FF:000313">
    <property type="entry name" value="Diacylglycerol kinase"/>
    <property type="match status" value="1"/>
</dbReference>
<dbReference type="FunFam" id="2.60.200.40:FF:000001">
    <property type="entry name" value="Diacylglycerol kinase"/>
    <property type="match status" value="1"/>
</dbReference>
<dbReference type="FunFam" id="3.30.60.20:FF:000002">
    <property type="entry name" value="Diacylglycerol kinase"/>
    <property type="match status" value="1"/>
</dbReference>
<dbReference type="FunFam" id="3.30.60.20:FF:000029">
    <property type="entry name" value="Diacylglycerol kinase"/>
    <property type="match status" value="1"/>
</dbReference>
<dbReference type="FunFam" id="3.40.50.10330:FF:000001">
    <property type="entry name" value="Diacylglycerol kinase"/>
    <property type="match status" value="1"/>
</dbReference>
<dbReference type="Gene3D" id="2.60.200.40">
    <property type="match status" value="1"/>
</dbReference>
<dbReference type="Gene3D" id="3.30.60.20">
    <property type="match status" value="2"/>
</dbReference>
<dbReference type="Gene3D" id="2.30.29.30">
    <property type="entry name" value="Pleckstrin-homology domain (PH domain)/Phosphotyrosine-binding domain (PTB)"/>
    <property type="match status" value="1"/>
</dbReference>
<dbReference type="Gene3D" id="3.40.50.10330">
    <property type="entry name" value="Probable inorganic polyphosphate/atp-NAD kinase, domain 1"/>
    <property type="match status" value="1"/>
</dbReference>
<dbReference type="Gene3D" id="1.10.150.50">
    <property type="entry name" value="Transcription Factor, Ets-1"/>
    <property type="match status" value="1"/>
</dbReference>
<dbReference type="InterPro" id="IPR017438">
    <property type="entry name" value="ATP-NAD_kinase_N"/>
</dbReference>
<dbReference type="InterPro" id="IPR046349">
    <property type="entry name" value="C1-like_sf"/>
</dbReference>
<dbReference type="InterPro" id="IPR037607">
    <property type="entry name" value="DGK"/>
</dbReference>
<dbReference type="InterPro" id="IPR054474">
    <property type="entry name" value="DGKD_4H"/>
</dbReference>
<dbReference type="InterPro" id="IPR000756">
    <property type="entry name" value="Diacylglycerol_kin_accessory"/>
</dbReference>
<dbReference type="InterPro" id="IPR001206">
    <property type="entry name" value="Diacylglycerol_kinase_cat_dom"/>
</dbReference>
<dbReference type="InterPro" id="IPR016064">
    <property type="entry name" value="NAD/diacylglycerol_kinase_sf"/>
</dbReference>
<dbReference type="InterPro" id="IPR002219">
    <property type="entry name" value="PE/DAG-bd"/>
</dbReference>
<dbReference type="InterPro" id="IPR011993">
    <property type="entry name" value="PH-like_dom_sf"/>
</dbReference>
<dbReference type="InterPro" id="IPR001849">
    <property type="entry name" value="PH_domain"/>
</dbReference>
<dbReference type="InterPro" id="IPR001660">
    <property type="entry name" value="SAM"/>
</dbReference>
<dbReference type="InterPro" id="IPR013761">
    <property type="entry name" value="SAM/pointed_sf"/>
</dbReference>
<dbReference type="PANTHER" id="PTHR11255">
    <property type="entry name" value="DIACYLGLYCEROL KINASE"/>
    <property type="match status" value="1"/>
</dbReference>
<dbReference type="PANTHER" id="PTHR11255:SF109">
    <property type="entry name" value="DIACYLGLYCEROL KINASE ETA"/>
    <property type="match status" value="1"/>
</dbReference>
<dbReference type="Pfam" id="PF00130">
    <property type="entry name" value="C1_1"/>
    <property type="match status" value="2"/>
</dbReference>
<dbReference type="Pfam" id="PF00609">
    <property type="entry name" value="DAGK_acc"/>
    <property type="match status" value="1"/>
</dbReference>
<dbReference type="Pfam" id="PF00781">
    <property type="entry name" value="DAGK_cat"/>
    <property type="match status" value="1"/>
</dbReference>
<dbReference type="Pfam" id="PF22944">
    <property type="entry name" value="DGKD_4H"/>
    <property type="match status" value="1"/>
</dbReference>
<dbReference type="Pfam" id="PF00169">
    <property type="entry name" value="PH"/>
    <property type="match status" value="1"/>
</dbReference>
<dbReference type="Pfam" id="PF00536">
    <property type="entry name" value="SAM_1"/>
    <property type="match status" value="1"/>
</dbReference>
<dbReference type="SMART" id="SM00109">
    <property type="entry name" value="C1"/>
    <property type="match status" value="2"/>
</dbReference>
<dbReference type="SMART" id="SM00045">
    <property type="entry name" value="DAGKa"/>
    <property type="match status" value="1"/>
</dbReference>
<dbReference type="SMART" id="SM00046">
    <property type="entry name" value="DAGKc"/>
    <property type="match status" value="1"/>
</dbReference>
<dbReference type="SMART" id="SM00233">
    <property type="entry name" value="PH"/>
    <property type="match status" value="1"/>
</dbReference>
<dbReference type="SMART" id="SM00454">
    <property type="entry name" value="SAM"/>
    <property type="match status" value="1"/>
</dbReference>
<dbReference type="SUPFAM" id="SSF57889">
    <property type="entry name" value="Cysteine-rich domain"/>
    <property type="match status" value="2"/>
</dbReference>
<dbReference type="SUPFAM" id="SSF111331">
    <property type="entry name" value="NAD kinase/diacylglycerol kinase-like"/>
    <property type="match status" value="2"/>
</dbReference>
<dbReference type="SUPFAM" id="SSF50729">
    <property type="entry name" value="PH domain-like"/>
    <property type="match status" value="1"/>
</dbReference>
<dbReference type="SUPFAM" id="SSF47769">
    <property type="entry name" value="SAM/Pointed domain"/>
    <property type="match status" value="1"/>
</dbReference>
<dbReference type="PROSITE" id="PS50146">
    <property type="entry name" value="DAGK"/>
    <property type="match status" value="1"/>
</dbReference>
<dbReference type="PROSITE" id="PS50003">
    <property type="entry name" value="PH_DOMAIN"/>
    <property type="match status" value="1"/>
</dbReference>
<dbReference type="PROSITE" id="PS50105">
    <property type="entry name" value="SAM_DOMAIN"/>
    <property type="match status" value="1"/>
</dbReference>
<dbReference type="PROSITE" id="PS00479">
    <property type="entry name" value="ZF_DAG_PE_1"/>
    <property type="match status" value="2"/>
</dbReference>
<dbReference type="PROSITE" id="PS50081">
    <property type="entry name" value="ZF_DAG_PE_2"/>
    <property type="match status" value="2"/>
</dbReference>
<accession>A8JQ65</accession>
<accession>Q86NT9</accession>
<name>DGKH_DROME</name>
<comment type="function">
    <text evidence="1">Phosphorylates diacylglycerol (DAG) to generate phosphatidic acid (PA).</text>
</comment>
<comment type="catalytic activity">
    <reaction>
        <text>a 1,2-diacyl-sn-glycerol + ATP = a 1,2-diacyl-sn-glycero-3-phosphate + ADP + H(+)</text>
        <dbReference type="Rhea" id="RHEA:10272"/>
        <dbReference type="ChEBI" id="CHEBI:15378"/>
        <dbReference type="ChEBI" id="CHEBI:17815"/>
        <dbReference type="ChEBI" id="CHEBI:30616"/>
        <dbReference type="ChEBI" id="CHEBI:58608"/>
        <dbReference type="ChEBI" id="CHEBI:456216"/>
        <dbReference type="EC" id="2.7.1.107"/>
    </reaction>
</comment>
<comment type="subcellular location">
    <subcellularLocation>
        <location evidence="1">Cytoplasm</location>
    </subcellularLocation>
</comment>
<comment type="similarity">
    <text evidence="2">Belongs to the eukaryotic diacylglycerol kinase family.</text>
</comment>
<comment type="sequence caution" evidence="8">
    <conflict type="miscellaneous discrepancy">
        <sequence resource="EMBL-CDS" id="AAO39647"/>
    </conflict>
    <text>Frameshift and deletion of residues 1685-1699.</text>
</comment>
<keyword id="KW-0067">ATP-binding</keyword>
<keyword id="KW-0963">Cytoplasm</keyword>
<keyword id="KW-0418">Kinase</keyword>
<keyword id="KW-0479">Metal-binding</keyword>
<keyword id="KW-0547">Nucleotide-binding</keyword>
<keyword id="KW-0597">Phosphoprotein</keyword>
<keyword id="KW-1185">Reference proteome</keyword>
<keyword id="KW-0677">Repeat</keyword>
<keyword id="KW-0808">Transferase</keyword>
<keyword id="KW-0862">Zinc</keyword>
<keyword id="KW-0863">Zinc-finger</keyword>
<organism>
    <name type="scientific">Drosophila melanogaster</name>
    <name type="common">Fruit fly</name>
    <dbReference type="NCBI Taxonomy" id="7227"/>
    <lineage>
        <taxon>Eukaryota</taxon>
        <taxon>Metazoa</taxon>
        <taxon>Ecdysozoa</taxon>
        <taxon>Arthropoda</taxon>
        <taxon>Hexapoda</taxon>
        <taxon>Insecta</taxon>
        <taxon>Pterygota</taxon>
        <taxon>Neoptera</taxon>
        <taxon>Endopterygota</taxon>
        <taxon>Diptera</taxon>
        <taxon>Brachycera</taxon>
        <taxon>Muscomorpha</taxon>
        <taxon>Ephydroidea</taxon>
        <taxon>Drosophilidae</taxon>
        <taxon>Drosophila</taxon>
        <taxon>Sophophora</taxon>
    </lineage>
</organism>